<keyword id="KW-0244">Early protein</keyword>
<sequence length="117" mass="13311">MAMTEESVDQVEVNCLCVQHGQSCNNTRCFVKEGLRANWFYNPVLEEFAIPDSYQEGHGVNVKITFSHRSRNLRHNGHDVICSYSHLGSHISIRCTCNKPRPHLSLIEAACSMYNLD</sequence>
<organismHost>
    <name type="scientific">Canis lupus familiaris</name>
    <name type="common">Dog</name>
    <name type="synonym">Canis familiaris</name>
    <dbReference type="NCBI Taxonomy" id="9615"/>
</organismHost>
<feature type="chain" id="PRO_0000221765" description="Early E3 13.3 kDa protein">
    <location>
        <begin position="1"/>
        <end position="117"/>
    </location>
</feature>
<proteinExistence type="predicted"/>
<accession>P68961</accession>
<accession>P22228</accession>
<protein>
    <recommendedName>
        <fullName>Early E3 13.3 kDa protein</fullName>
    </recommendedName>
</protein>
<name>E313_ADECR</name>
<dbReference type="EMBL" id="Y07760">
    <property type="protein sequence ID" value="CAA69042.1"/>
    <property type="molecule type" value="Genomic_DNA"/>
</dbReference>
<dbReference type="RefSeq" id="AP_000066.1">
    <property type="nucleotide sequence ID" value="AC_000003.1"/>
</dbReference>
<dbReference type="RefSeq" id="NP_044204.1">
    <property type="nucleotide sequence ID" value="NC_001734.1"/>
</dbReference>
<dbReference type="GeneID" id="1488938"/>
<dbReference type="KEGG" id="vg:1488938"/>
<dbReference type="Proteomes" id="UP000126130">
    <property type="component" value="Segment"/>
</dbReference>
<organism>
    <name type="scientific">Canine adenovirus serotype 1 (strain RI261)</name>
    <name type="common">CAdV-1</name>
    <name type="synonym">Canine adenovirus 1 (strain RI261)</name>
    <dbReference type="NCBI Taxonomy" id="69151"/>
    <lineage>
        <taxon>Viruses</taxon>
        <taxon>Varidnaviria</taxon>
        <taxon>Bamfordvirae</taxon>
        <taxon>Preplasmiviricota</taxon>
        <taxon>Tectiliviricetes</taxon>
        <taxon>Rowavirales</taxon>
        <taxon>Adenoviridae</taxon>
        <taxon>Mastadenovirus</taxon>
        <taxon>Canine mastadenovirus A</taxon>
    </lineage>
</organism>
<reference key="1">
    <citation type="journal article" date="1997" name="J. Gen. Virol.">
        <title>Complete DNA sequence of canine adenovirus type 1.</title>
        <authorList>
            <person name="Morrison M.D."/>
            <person name="Onions D.E."/>
            <person name="Nicolson L."/>
        </authorList>
    </citation>
    <scope>NUCLEOTIDE SEQUENCE [LARGE SCALE GENOMIC DNA]</scope>
</reference>